<accession>A6H0R5</accession>
<sequence>MADLMKFVQDEFVTRKDFPVFGAGDTITVFYEIKEGEKTRTQFFKGVVIQRRGSGNTETFTIRKMSGAVGVERIFPVNLPALQKIEINKKGAVRRARIFYFRELTGKKAKIRDKRR</sequence>
<feature type="chain" id="PRO_1000049674" description="Large ribosomal subunit protein bL19">
    <location>
        <begin position="1"/>
        <end position="116"/>
    </location>
</feature>
<gene>
    <name evidence="1" type="primary">rplS</name>
    <name type="ordered locus">FP1873</name>
</gene>
<reference key="1">
    <citation type="journal article" date="2007" name="Nat. Biotechnol.">
        <title>Complete genome sequence of the fish pathogen Flavobacterium psychrophilum.</title>
        <authorList>
            <person name="Duchaud E."/>
            <person name="Boussaha M."/>
            <person name="Loux V."/>
            <person name="Bernardet J.-F."/>
            <person name="Michel C."/>
            <person name="Kerouault B."/>
            <person name="Mondot S."/>
            <person name="Nicolas P."/>
            <person name="Bossy R."/>
            <person name="Caron C."/>
            <person name="Bessieres P."/>
            <person name="Gibrat J.-F."/>
            <person name="Claverol S."/>
            <person name="Dumetz F."/>
            <person name="Le Henaff M."/>
            <person name="Benmansour A."/>
        </authorList>
    </citation>
    <scope>NUCLEOTIDE SEQUENCE [LARGE SCALE GENOMIC DNA]</scope>
    <source>
        <strain>ATCC 49511 / DSM 21280 / CIP 103535 / JIP02/86</strain>
    </source>
</reference>
<dbReference type="EMBL" id="AM398681">
    <property type="protein sequence ID" value="CAL43939.1"/>
    <property type="molecule type" value="Genomic_DNA"/>
</dbReference>
<dbReference type="RefSeq" id="WP_011963978.1">
    <property type="nucleotide sequence ID" value="NC_009613.3"/>
</dbReference>
<dbReference type="RefSeq" id="YP_001296742.1">
    <property type="nucleotide sequence ID" value="NC_009613.3"/>
</dbReference>
<dbReference type="SMR" id="A6H0R5"/>
<dbReference type="STRING" id="402612.FP1873"/>
<dbReference type="EnsemblBacteria" id="CAL43939">
    <property type="protein sequence ID" value="CAL43939"/>
    <property type="gene ID" value="FP1873"/>
</dbReference>
<dbReference type="GeneID" id="66551943"/>
<dbReference type="KEGG" id="fps:FP1873"/>
<dbReference type="PATRIC" id="fig|402612.5.peg.1899"/>
<dbReference type="eggNOG" id="COG0335">
    <property type="taxonomic scope" value="Bacteria"/>
</dbReference>
<dbReference type="HOGENOM" id="CLU_103507_2_2_10"/>
<dbReference type="OrthoDB" id="9803541at2"/>
<dbReference type="Proteomes" id="UP000006394">
    <property type="component" value="Chromosome"/>
</dbReference>
<dbReference type="GO" id="GO:0022625">
    <property type="term" value="C:cytosolic large ribosomal subunit"/>
    <property type="evidence" value="ECO:0007669"/>
    <property type="project" value="TreeGrafter"/>
</dbReference>
<dbReference type="GO" id="GO:0003735">
    <property type="term" value="F:structural constituent of ribosome"/>
    <property type="evidence" value="ECO:0007669"/>
    <property type="project" value="InterPro"/>
</dbReference>
<dbReference type="GO" id="GO:0006412">
    <property type="term" value="P:translation"/>
    <property type="evidence" value="ECO:0007669"/>
    <property type="project" value="UniProtKB-UniRule"/>
</dbReference>
<dbReference type="Gene3D" id="2.30.30.790">
    <property type="match status" value="1"/>
</dbReference>
<dbReference type="HAMAP" id="MF_00402">
    <property type="entry name" value="Ribosomal_bL19"/>
    <property type="match status" value="1"/>
</dbReference>
<dbReference type="InterPro" id="IPR001857">
    <property type="entry name" value="Ribosomal_bL19"/>
</dbReference>
<dbReference type="InterPro" id="IPR038657">
    <property type="entry name" value="Ribosomal_bL19_sf"/>
</dbReference>
<dbReference type="InterPro" id="IPR008991">
    <property type="entry name" value="Translation_prot_SH3-like_sf"/>
</dbReference>
<dbReference type="NCBIfam" id="TIGR01024">
    <property type="entry name" value="rplS_bact"/>
    <property type="match status" value="1"/>
</dbReference>
<dbReference type="PANTHER" id="PTHR15680:SF9">
    <property type="entry name" value="LARGE RIBOSOMAL SUBUNIT PROTEIN BL19M"/>
    <property type="match status" value="1"/>
</dbReference>
<dbReference type="PANTHER" id="PTHR15680">
    <property type="entry name" value="RIBOSOMAL PROTEIN L19"/>
    <property type="match status" value="1"/>
</dbReference>
<dbReference type="Pfam" id="PF01245">
    <property type="entry name" value="Ribosomal_L19"/>
    <property type="match status" value="1"/>
</dbReference>
<dbReference type="PIRSF" id="PIRSF002191">
    <property type="entry name" value="Ribosomal_L19"/>
    <property type="match status" value="1"/>
</dbReference>
<dbReference type="PRINTS" id="PR00061">
    <property type="entry name" value="RIBOSOMALL19"/>
</dbReference>
<dbReference type="SUPFAM" id="SSF50104">
    <property type="entry name" value="Translation proteins SH3-like domain"/>
    <property type="match status" value="1"/>
</dbReference>
<protein>
    <recommendedName>
        <fullName evidence="1">Large ribosomal subunit protein bL19</fullName>
    </recommendedName>
    <alternativeName>
        <fullName evidence="2">50S ribosomal protein L19</fullName>
    </alternativeName>
</protein>
<organism>
    <name type="scientific">Flavobacterium psychrophilum (strain ATCC 49511 / DSM 21280 / CIP 103535 / JIP02/86)</name>
    <dbReference type="NCBI Taxonomy" id="402612"/>
    <lineage>
        <taxon>Bacteria</taxon>
        <taxon>Pseudomonadati</taxon>
        <taxon>Bacteroidota</taxon>
        <taxon>Flavobacteriia</taxon>
        <taxon>Flavobacteriales</taxon>
        <taxon>Flavobacteriaceae</taxon>
        <taxon>Flavobacterium</taxon>
    </lineage>
</organism>
<keyword id="KW-1185">Reference proteome</keyword>
<keyword id="KW-0687">Ribonucleoprotein</keyword>
<keyword id="KW-0689">Ribosomal protein</keyword>
<proteinExistence type="inferred from homology"/>
<comment type="function">
    <text evidence="1">This protein is located at the 30S-50S ribosomal subunit interface and may play a role in the structure and function of the aminoacyl-tRNA binding site.</text>
</comment>
<comment type="similarity">
    <text evidence="1">Belongs to the bacterial ribosomal protein bL19 family.</text>
</comment>
<name>RL19_FLAPJ</name>
<evidence type="ECO:0000255" key="1">
    <source>
        <dbReference type="HAMAP-Rule" id="MF_00402"/>
    </source>
</evidence>
<evidence type="ECO:0000305" key="2"/>